<keyword id="KW-0025">Alternative splicing</keyword>
<keyword id="KW-0090">Biological rhythms</keyword>
<keyword id="KW-0539">Nucleus</keyword>
<keyword id="KW-0597">Phosphoprotein</keyword>
<keyword id="KW-1185">Reference proteome</keyword>
<keyword id="KW-0804">Transcription</keyword>
<keyword id="KW-0805">Transcription regulation</keyword>
<keyword id="KW-0902">Two-component regulatory system</keyword>
<accession>Q8L500</accession>
<accession>O81035</accession>
<accession>Q9LKL1</accession>
<gene>
    <name type="primary">APRR9</name>
    <name type="ordered locus">At2g46790</name>
    <name type="ORF">F19D11.7</name>
</gene>
<organism>
    <name type="scientific">Arabidopsis thaliana</name>
    <name type="common">Mouse-ear cress</name>
    <dbReference type="NCBI Taxonomy" id="3702"/>
    <lineage>
        <taxon>Eukaryota</taxon>
        <taxon>Viridiplantae</taxon>
        <taxon>Streptophyta</taxon>
        <taxon>Embryophyta</taxon>
        <taxon>Tracheophyta</taxon>
        <taxon>Spermatophyta</taxon>
        <taxon>Magnoliopsida</taxon>
        <taxon>eudicotyledons</taxon>
        <taxon>Gunneridae</taxon>
        <taxon>Pentapetalae</taxon>
        <taxon>rosids</taxon>
        <taxon>malvids</taxon>
        <taxon>Brassicales</taxon>
        <taxon>Brassicaceae</taxon>
        <taxon>Camelineae</taxon>
        <taxon>Arabidopsis</taxon>
    </lineage>
</organism>
<reference key="1">
    <citation type="journal article" date="2000" name="Plant Cell Physiol.">
        <title>Circadian waves of expression of the APRR1/TOC1 family of pseudo-response regulators in Arabidopsis thaliana: insight into the plant circadian clock.</title>
        <authorList>
            <person name="Matsushika A."/>
            <person name="Makino S."/>
            <person name="Kojima M."/>
            <person name="Mizuno T."/>
        </authorList>
    </citation>
    <scope>NUCLEOTIDE SEQUENCE [MRNA]</scope>
    <scope>FUNCTION</scope>
</reference>
<reference key="2">
    <citation type="journal article" date="2000" name="Science">
        <title>Cloning of the Arabidopsis clock gene TOC1, an autoregulatory response regulator homolog.</title>
        <authorList>
            <person name="Strayer C."/>
            <person name="Oyama T."/>
            <person name="Schultz T.F."/>
            <person name="Raman R."/>
            <person name="Somers D.E."/>
            <person name="Mas P."/>
            <person name="Panda S."/>
            <person name="Kreps J.A."/>
            <person name="Kay S.A."/>
        </authorList>
    </citation>
    <scope>NUCLEOTIDE SEQUENCE [MRNA]</scope>
    <source>
        <strain>cv. Columbia</strain>
    </source>
</reference>
<reference key="3">
    <citation type="journal article" date="1999" name="Nature">
        <title>Sequence and analysis of chromosome 2 of the plant Arabidopsis thaliana.</title>
        <authorList>
            <person name="Lin X."/>
            <person name="Kaul S."/>
            <person name="Rounsley S.D."/>
            <person name="Shea T.P."/>
            <person name="Benito M.-I."/>
            <person name="Town C.D."/>
            <person name="Fujii C.Y."/>
            <person name="Mason T.M."/>
            <person name="Bowman C.L."/>
            <person name="Barnstead M.E."/>
            <person name="Feldblyum T.V."/>
            <person name="Buell C.R."/>
            <person name="Ketchum K.A."/>
            <person name="Lee J.J."/>
            <person name="Ronning C.M."/>
            <person name="Koo H.L."/>
            <person name="Moffat K.S."/>
            <person name="Cronin L.A."/>
            <person name="Shen M."/>
            <person name="Pai G."/>
            <person name="Van Aken S."/>
            <person name="Umayam L."/>
            <person name="Tallon L.J."/>
            <person name="Gill J.E."/>
            <person name="Adams M.D."/>
            <person name="Carrera A.J."/>
            <person name="Creasy T.H."/>
            <person name="Goodman H.M."/>
            <person name="Somerville C.R."/>
            <person name="Copenhaver G.P."/>
            <person name="Preuss D."/>
            <person name="Nierman W.C."/>
            <person name="White O."/>
            <person name="Eisen J.A."/>
            <person name="Salzberg S.L."/>
            <person name="Fraser C.M."/>
            <person name="Venter J.C."/>
        </authorList>
    </citation>
    <scope>NUCLEOTIDE SEQUENCE [LARGE SCALE GENOMIC DNA]</scope>
    <source>
        <strain>cv. Columbia</strain>
    </source>
</reference>
<reference key="4">
    <citation type="journal article" date="2017" name="Plant J.">
        <title>Araport11: a complete reannotation of the Arabidopsis thaliana reference genome.</title>
        <authorList>
            <person name="Cheng C.Y."/>
            <person name="Krishnakumar V."/>
            <person name="Chan A.P."/>
            <person name="Thibaud-Nissen F."/>
            <person name="Schobel S."/>
            <person name="Town C.D."/>
        </authorList>
    </citation>
    <scope>GENOME REANNOTATION</scope>
    <source>
        <strain>cv. Columbia</strain>
    </source>
</reference>
<reference key="5">
    <citation type="journal article" date="2003" name="Science">
        <title>Empirical analysis of transcriptional activity in the Arabidopsis genome.</title>
        <authorList>
            <person name="Yamada K."/>
            <person name="Lim J."/>
            <person name="Dale J.M."/>
            <person name="Chen H."/>
            <person name="Shinn P."/>
            <person name="Palm C.J."/>
            <person name="Southwick A.M."/>
            <person name="Wu H.C."/>
            <person name="Kim C.J."/>
            <person name="Nguyen M."/>
            <person name="Pham P.K."/>
            <person name="Cheuk R.F."/>
            <person name="Karlin-Newmann G."/>
            <person name="Liu S.X."/>
            <person name="Lam B."/>
            <person name="Sakano H."/>
            <person name="Wu T."/>
            <person name="Yu G."/>
            <person name="Miranda M."/>
            <person name="Quach H.L."/>
            <person name="Tripp M."/>
            <person name="Chang C.H."/>
            <person name="Lee J.M."/>
            <person name="Toriumi M.J."/>
            <person name="Chan M.M."/>
            <person name="Tang C.C."/>
            <person name="Onodera C.S."/>
            <person name="Deng J.M."/>
            <person name="Akiyama K."/>
            <person name="Ansari Y."/>
            <person name="Arakawa T."/>
            <person name="Banh J."/>
            <person name="Banno F."/>
            <person name="Bowser L."/>
            <person name="Brooks S.Y."/>
            <person name="Carninci P."/>
            <person name="Chao Q."/>
            <person name="Choy N."/>
            <person name="Enju A."/>
            <person name="Goldsmith A.D."/>
            <person name="Gurjal M."/>
            <person name="Hansen N.F."/>
            <person name="Hayashizaki Y."/>
            <person name="Johnson-Hopson C."/>
            <person name="Hsuan V.W."/>
            <person name="Iida K."/>
            <person name="Karnes M."/>
            <person name="Khan S."/>
            <person name="Koesema E."/>
            <person name="Ishida J."/>
            <person name="Jiang P.X."/>
            <person name="Jones T."/>
            <person name="Kawai J."/>
            <person name="Kamiya A."/>
            <person name="Meyers C."/>
            <person name="Nakajima M."/>
            <person name="Narusaka M."/>
            <person name="Seki M."/>
            <person name="Sakurai T."/>
            <person name="Satou M."/>
            <person name="Tamse R."/>
            <person name="Vaysberg M."/>
            <person name="Wallender E.K."/>
            <person name="Wong C."/>
            <person name="Yamamura Y."/>
            <person name="Yuan S."/>
            <person name="Shinozaki K."/>
            <person name="Davis R.W."/>
            <person name="Theologis A."/>
            <person name="Ecker J.R."/>
        </authorList>
    </citation>
    <scope>NUCLEOTIDE SEQUENCE [LARGE SCALE MRNA]</scope>
    <source>
        <strain>cv. Columbia</strain>
    </source>
</reference>
<reference key="6">
    <citation type="journal article" date="2000" name="Plant Cell Physiol.">
        <title>Genes encoding pseudo-response regulators: insight into His-to-Asp phosphorelay and circadian rhythm in Arabidopsis thaliana.</title>
        <authorList>
            <person name="Makino S."/>
            <person name="Kiba T."/>
            <person name="Imamura A."/>
            <person name="Hanaki N."/>
            <person name="Nakamura A."/>
            <person name="Suzuki T."/>
            <person name="Taniguchi M."/>
            <person name="Ueguchi C."/>
            <person name="Sugiyama T."/>
            <person name="Mizuno T."/>
        </authorList>
    </citation>
    <scope>GENE FAMILY</scope>
</reference>
<reference key="7">
    <citation type="journal article" date="2008" name="J. Biol. Chem.">
        <title>Post-translational regulation of the Arabidopsis circadian clock through selective proteolysis and phosphorylation of pseudo-response regulator proteins.</title>
        <authorList>
            <person name="Fujiwara S."/>
            <person name="Wang L."/>
            <person name="Han L."/>
            <person name="Suh S.-S."/>
            <person name="Salome P.A."/>
            <person name="McClung C.R."/>
            <person name="Somers D.E."/>
        </authorList>
    </citation>
    <scope>PHOSPHORYLATION</scope>
</reference>
<reference key="8">
    <citation type="journal article" date="2010" name="Nature">
        <title>A methyl transferase links the circadian clock to the regulation of alternative splicing.</title>
        <authorList>
            <person name="Sanchez S.E."/>
            <person name="Petrillo E."/>
            <person name="Beckwith E.J."/>
            <person name="Zhang X."/>
            <person name="Rugnone M.L."/>
            <person name="Hernando C.E."/>
            <person name="Cuevas J.C."/>
            <person name="Godoy Herz M.A."/>
            <person name="Depetris-Chauvin A."/>
            <person name="Simpson C.G."/>
            <person name="Brown J.W."/>
            <person name="Cerdan P.D."/>
            <person name="Borevitz J.O."/>
            <person name="Mas P."/>
            <person name="Ceriani M.F."/>
            <person name="Kornblihtt A.R."/>
            <person name="Yanovsky M.J."/>
        </authorList>
    </citation>
    <scope>REGULATION</scope>
</reference>
<reference key="9">
    <citation type="journal article" date="2010" name="Plant Cell">
        <title>PSEUDO-RESPONSE REGULATORS 9, 7, and 5 are transcriptional repressors in the Arabidopsis circadian clock.</title>
        <authorList>
            <person name="Nakamichi N."/>
            <person name="Kiba T."/>
            <person name="Henriques R."/>
            <person name="Mizuno T."/>
            <person name="Chua N.H."/>
            <person name="Sakakibara H."/>
        </authorList>
    </citation>
    <scope>FUNCTION</scope>
</reference>
<reference key="10">
    <citation type="journal article" date="2010" name="Plant Cell">
        <title>The role of the Arabidopsis morning loop components CCA1, LHY, PRR7, and PRR9 in temperature compensation.</title>
        <authorList>
            <person name="Salome P.A."/>
            <person name="Weigel D."/>
            <person name="McClung C.R."/>
        </authorList>
    </citation>
    <scope>FUNCTION</scope>
</reference>
<reference key="11">
    <citation type="journal article" date="2011" name="Plant Cell">
        <title>LIGHT-REGULATED WD1 and PSEUDO-RESPONSE REGULATOR9 form a positive feedback regulatory loop in the Arabidopsis circadian clock.</title>
        <authorList>
            <person name="Wang Y."/>
            <person name="Wu J.F."/>
            <person name="Nakamichi N."/>
            <person name="Sakakibara H."/>
            <person name="Nam H.G."/>
            <person name="Wu S.H."/>
        </authorList>
    </citation>
    <scope>FUNCTION</scope>
    <scope>INDUCTION</scope>
</reference>
<reference key="12">
    <citation type="journal article" date="2012" name="Plant Signal. Behav.">
        <title>ELF3 recruitment to the PRR9 promoter requires other Evening Complex members in the Arabidopsis circadian clock.</title>
        <authorList>
            <person name="Chow B.Y."/>
            <person name="Helfer A."/>
            <person name="Nusinow D.A."/>
            <person name="Kay S.A."/>
        </authorList>
    </citation>
    <scope>REGULATION</scope>
</reference>
<reference key="13">
    <citation type="journal article" date="2012" name="Plant Cell">
        <title>EARLY FLOWERING4 recruitment of EARLY FLOWERING3 in the nucleus sustains the Arabidopsis circadian clock.</title>
        <authorList>
            <person name="Herrero E."/>
            <person name="Kolmos E."/>
            <person name="Bujdoso N."/>
            <person name="Yuan Y."/>
            <person name="Wang M."/>
            <person name="Berns M.C."/>
            <person name="Uhlworm H."/>
            <person name="Coupland G."/>
            <person name="Saini R."/>
            <person name="Jaskolski M."/>
            <person name="Webb A."/>
            <person name="Goncalves J."/>
            <person name="Davis S.J."/>
        </authorList>
    </citation>
    <scope>REGULATION</scope>
</reference>
<reference key="14">
    <citation type="journal article" date="2012" name="Plant Cell">
        <title>SKIP is a component of the spliceosome linking alternative splicing and the circadian clock in Arabidopsis.</title>
        <authorList>
            <person name="Wang X."/>
            <person name="Wu F."/>
            <person name="Xie Q."/>
            <person name="Wang H."/>
            <person name="Wang Y."/>
            <person name="Yue Y."/>
            <person name="Gahura O."/>
            <person name="Ma S."/>
            <person name="Liu L."/>
            <person name="Cao Y."/>
            <person name="Jiao Y."/>
            <person name="Puta F."/>
            <person name="McClung C.R."/>
            <person name="Xu X."/>
            <person name="Ma L."/>
        </authorList>
    </citation>
    <scope>REGULATION</scope>
</reference>
<reference key="15">
    <citation type="journal article" date="2012" name="Proc. Natl. Acad. Sci. U.S.A.">
        <title>Transcriptional repressor PRR5 directly regulates clock-output pathways.</title>
        <authorList>
            <person name="Nakamichi N."/>
            <person name="Kiba T."/>
            <person name="Kamioka M."/>
            <person name="Suzuki T."/>
            <person name="Yamashino T."/>
            <person name="Higashiyama T."/>
            <person name="Sakakibara H."/>
            <person name="Mizuno T."/>
        </authorList>
    </citation>
    <scope>FUNCTION</scope>
</reference>
<reference key="16">
    <citation type="journal article" date="2013" name="Plant Cell">
        <title>Heat shock-induced fluctuations in clock and light signaling enhance phytochrome B-mediated Arabidopsis deetiolation.</title>
        <authorList>
            <person name="Karayekov E."/>
            <person name="Sellaro R."/>
            <person name="Legris M."/>
            <person name="Yanovsky M.J."/>
            <person name="Casal J.J."/>
        </authorList>
    </citation>
    <scope>INDUCTION BY HEAT-SHOCK</scope>
</reference>
<proteinExistence type="evidence at protein level"/>
<comment type="function">
    <text evidence="4 6 7 8 9">Transcriptional repressor of CCA1 and LHY, and positive regulator of LWD1 and LWD2 expression. Controls photoperiodic flowering response and temperature compensation. Involved in the positive and negative feedback loops of the circadian clock. Expression of several members of the ARR-like family is controlled by circadian rhythm. Regulated at the transcriptional level by a corepressor complex consisting of ELF4, ELF3, and LUX. APRR9, APRR7, and APRR5 coordinately act on the upstream region of the target genes to repress their expression from noon until midnight. The particular coordinated sequential expression of APRR9, APRR7, APRR5, APRR3 and APPR1 result to circadian waves that may be at the basis of the endogenous circadian clock.</text>
</comment>
<comment type="interaction">
    <interactant intactId="EBI-7920168">
        <id>Q8L500</id>
    </interactant>
    <interactant intactId="EBI-15192077">
        <id>Q9SJU5</id>
        <label>BBX18</label>
    </interactant>
    <organismsDiffer>false</organismsDiffer>
    <experiments>3</experiments>
</comment>
<comment type="interaction">
    <interactant intactId="EBI-7920168">
        <id>Q8L500</id>
    </interactant>
    <interactant intactId="EBI-4430993">
        <id>C0SVM5</id>
        <label>BBX19</label>
    </interactant>
    <organismsDiffer>false</organismsDiffer>
    <experiments>3</experiments>
</comment>
<comment type="interaction">
    <interactant intactId="EBI-7920168">
        <id>Q8L500</id>
    </interactant>
    <interactant intactId="EBI-2125983">
        <id>Q8LCG7</id>
        <label>NFYC2</label>
    </interactant>
    <organismsDiffer>false</organismsDiffer>
    <experiments>3</experiments>
</comment>
<comment type="interaction">
    <interactant intactId="EBI-7920168">
        <id>Q8L500</id>
    </interactant>
    <interactant intactId="EBI-2466018">
        <id>Q9FMV5</id>
        <label>NFYC4</label>
    </interactant>
    <organismsDiffer>false</organismsDiffer>
    <experiments>3</experiments>
</comment>
<comment type="subcellular location">
    <subcellularLocation>
        <location evidence="11">Nucleus</location>
    </subcellularLocation>
</comment>
<comment type="alternative products">
    <event type="alternative splicing"/>
    <isoform>
        <id>Q8L500-1</id>
        <name>1</name>
        <sequence type="displayed"/>
    </isoform>
    <text>A number of isoforms are produced. According to EST sequences.</text>
</comment>
<comment type="induction">
    <text evidence="8 10">Up-regulated by heat-shock.</text>
</comment>
<comment type="PTM">
    <text evidence="5">Phosphorylated. Phosphorylation varies throughout the diurnal cycle.</text>
</comment>
<comment type="miscellaneous">
    <text evidence="12 13 14">Regulated at the level of mRNA maturation and alternative splicing by SKIP (PubMed:22942380) and PRMT5 (PubMed:20962777). The expression of APRR9, APRR7, and APRR5 requires the presence of LWD1 and/or LWD2, indicating the existence of a positive feedback loop within the circadian clock (PubMed:21357491).</text>
</comment>
<comment type="similarity">
    <text evidence="11">Belongs to the ARR-like family.</text>
</comment>
<comment type="caution">
    <text evidence="11">Lacks the phospho-accepting Asp (here Glu-89), present in the receiver domain, which is one of the conserved features of two-component response regulators (ARRs) family.</text>
</comment>
<comment type="sequence caution" evidence="11">
    <conflict type="frameshift">
        <sequence resource="EMBL-CDS" id="AAM20527"/>
    </conflict>
</comment>
<comment type="sequence caution" evidence="11">
    <conflict type="frameshift">
        <sequence resource="EMBL-CDS" id="AAM91256"/>
    </conflict>
</comment>
<sequence length="468" mass="52565">MGEIVVLSSDDGMETIKNRVKSSEVVQWEKYLPKTVLRVLLVESDYSTRQIITALLRKCCYKVVAVSDGLAAWEVLKEKSHNIDLILTELDLPSISGFALLALVMEHEACKNIPVIMMSSQDSIKMVLKCMLRGAADYLIKPMRKNELKNLWQHVWRRLTLRDDPTAHAQSLPASQHNLEDTDETCEDSRYHSDQGSGAQAINYNGHNKLMENGKSVDERDEFKETFDVTMDLIGGIDKRPDSIYKDKSRDECVGPELGLSLKRSCSVSFENQDESKHQKLSLSDASAFSRFEESKSAEKAVVALEESTSGEPKTPTESHEKLRKVTSDQGSATTSSNQENIGSSSVSFRNQVLQSTVTNQKQDSPIPVESNREKAASKEVEAGSQSTNEGIAGQSSSTEKPKEEESAKQRWSRSQREAALMKFRLKRKDRCFDKKVRYQSRKKLAEQRPRVKGQFVRTVNSDASTKS</sequence>
<evidence type="ECO:0000255" key="1">
    <source>
        <dbReference type="PROSITE-ProRule" id="PRU00169"/>
    </source>
</evidence>
<evidence type="ECO:0000255" key="2">
    <source>
        <dbReference type="PROSITE-ProRule" id="PRU00357"/>
    </source>
</evidence>
<evidence type="ECO:0000256" key="3">
    <source>
        <dbReference type="SAM" id="MobiDB-lite"/>
    </source>
</evidence>
<evidence type="ECO:0000269" key="4">
    <source>
    </source>
</evidence>
<evidence type="ECO:0000269" key="5">
    <source>
    </source>
</evidence>
<evidence type="ECO:0000269" key="6">
    <source>
    </source>
</evidence>
<evidence type="ECO:0000269" key="7">
    <source>
    </source>
</evidence>
<evidence type="ECO:0000269" key="8">
    <source>
    </source>
</evidence>
<evidence type="ECO:0000269" key="9">
    <source>
    </source>
</evidence>
<evidence type="ECO:0000269" key="10">
    <source>
    </source>
</evidence>
<evidence type="ECO:0000305" key="11"/>
<evidence type="ECO:0000305" key="12">
    <source>
    </source>
</evidence>
<evidence type="ECO:0000305" key="13">
    <source>
    </source>
</evidence>
<evidence type="ECO:0000305" key="14">
    <source>
    </source>
</evidence>
<name>APRR9_ARATH</name>
<protein>
    <recommendedName>
        <fullName>Two-component response regulator-like APRR9</fullName>
    </recommendedName>
    <alternativeName>
        <fullName>Pseudo-response regulator 9</fullName>
    </alternativeName>
</protein>
<dbReference type="EMBL" id="AB046953">
    <property type="protein sequence ID" value="BAB13741.1"/>
    <property type="molecule type" value="mRNA"/>
</dbReference>
<dbReference type="EMBL" id="AF272040">
    <property type="protein sequence ID" value="AAF86253.1"/>
    <property type="molecule type" value="mRNA"/>
</dbReference>
<dbReference type="EMBL" id="AC005310">
    <property type="protein sequence ID" value="AAC33497.2"/>
    <property type="molecule type" value="Genomic_DNA"/>
</dbReference>
<dbReference type="EMBL" id="CP002685">
    <property type="protein sequence ID" value="AEC10754.1"/>
    <property type="molecule type" value="Genomic_DNA"/>
</dbReference>
<dbReference type="EMBL" id="AY099676">
    <property type="protein sequence ID" value="AAM20527.1"/>
    <property type="status" value="ALT_FRAME"/>
    <property type="molecule type" value="mRNA"/>
</dbReference>
<dbReference type="EMBL" id="AY128856">
    <property type="protein sequence ID" value="AAM91256.1"/>
    <property type="status" value="ALT_FRAME"/>
    <property type="molecule type" value="mRNA"/>
</dbReference>
<dbReference type="PIR" id="T02680">
    <property type="entry name" value="T02680"/>
</dbReference>
<dbReference type="RefSeq" id="NP_001325091.1">
    <property type="nucleotide sequence ID" value="NM_001337214.1"/>
</dbReference>
<dbReference type="RefSeq" id="NP_001325092.1">
    <property type="nucleotide sequence ID" value="NM_001337213.1"/>
</dbReference>
<dbReference type="RefSeq" id="NP_566085.1">
    <molecule id="Q8L500-1"/>
    <property type="nucleotide sequence ID" value="NM_130245.5"/>
</dbReference>
<dbReference type="SMR" id="Q8L500"/>
<dbReference type="BioGRID" id="4627">
    <property type="interactions" value="18"/>
</dbReference>
<dbReference type="FunCoup" id="Q8L500">
    <property type="interactions" value="4"/>
</dbReference>
<dbReference type="IntAct" id="Q8L500">
    <property type="interactions" value="12"/>
</dbReference>
<dbReference type="MINT" id="Q8L500"/>
<dbReference type="STRING" id="3702.Q8L500"/>
<dbReference type="PaxDb" id="3702-AT2G46790.1"/>
<dbReference type="EnsemblPlants" id="AT2G46790.1">
    <molecule id="Q8L500-1"/>
    <property type="protein sequence ID" value="AT2G46790.1"/>
    <property type="gene ID" value="AT2G46790"/>
</dbReference>
<dbReference type="GeneID" id="819292"/>
<dbReference type="Gramene" id="AT2G46790.1">
    <molecule id="Q8L500-1"/>
    <property type="protein sequence ID" value="AT2G46790.1"/>
    <property type="gene ID" value="AT2G46790"/>
</dbReference>
<dbReference type="KEGG" id="ath:AT2G46790"/>
<dbReference type="Araport" id="AT2G46790"/>
<dbReference type="TAIR" id="AT2G46790">
    <property type="gene designation" value="PRR9"/>
</dbReference>
<dbReference type="eggNOG" id="KOG1601">
    <property type="taxonomic scope" value="Eukaryota"/>
</dbReference>
<dbReference type="HOGENOM" id="CLU_041215_0_0_1"/>
<dbReference type="InParanoid" id="Q8L500"/>
<dbReference type="OMA" id="PRRMTCS"/>
<dbReference type="PhylomeDB" id="Q8L500"/>
<dbReference type="PRO" id="PR:Q8L500"/>
<dbReference type="Proteomes" id="UP000006548">
    <property type="component" value="Chromosome 2"/>
</dbReference>
<dbReference type="ExpressionAtlas" id="Q8L500">
    <property type="expression patterns" value="baseline and differential"/>
</dbReference>
<dbReference type="GO" id="GO:0005634">
    <property type="term" value="C:nucleus"/>
    <property type="evidence" value="ECO:0007669"/>
    <property type="project" value="UniProtKB-SubCell"/>
</dbReference>
<dbReference type="GO" id="GO:0003677">
    <property type="term" value="F:DNA binding"/>
    <property type="evidence" value="ECO:0000353"/>
    <property type="project" value="TAIR"/>
</dbReference>
<dbReference type="GO" id="GO:0007623">
    <property type="term" value="P:circadian rhythm"/>
    <property type="evidence" value="ECO:0000315"/>
    <property type="project" value="TAIR"/>
</dbReference>
<dbReference type="GO" id="GO:0009736">
    <property type="term" value="P:cytokinin-activated signaling pathway"/>
    <property type="evidence" value="ECO:0007669"/>
    <property type="project" value="InterPro"/>
</dbReference>
<dbReference type="GO" id="GO:0045892">
    <property type="term" value="P:negative regulation of DNA-templated transcription"/>
    <property type="evidence" value="ECO:0000314"/>
    <property type="project" value="TAIR"/>
</dbReference>
<dbReference type="GO" id="GO:0000160">
    <property type="term" value="P:phosphorelay signal transduction system"/>
    <property type="evidence" value="ECO:0007669"/>
    <property type="project" value="UniProtKB-KW"/>
</dbReference>
<dbReference type="GO" id="GO:0010017">
    <property type="term" value="P:red or far-red light signaling pathway"/>
    <property type="evidence" value="ECO:0000315"/>
    <property type="project" value="TAIR"/>
</dbReference>
<dbReference type="GO" id="GO:0006355">
    <property type="term" value="P:regulation of DNA-templated transcription"/>
    <property type="evidence" value="ECO:0000304"/>
    <property type="project" value="TAIR"/>
</dbReference>
<dbReference type="CDD" id="cd17582">
    <property type="entry name" value="psREC_PRR"/>
    <property type="match status" value="1"/>
</dbReference>
<dbReference type="FunFam" id="3.40.50.2300:FF:000214">
    <property type="entry name" value="Two-component response regulator-like PRR37"/>
    <property type="match status" value="1"/>
</dbReference>
<dbReference type="Gene3D" id="3.40.50.2300">
    <property type="match status" value="1"/>
</dbReference>
<dbReference type="InterPro" id="IPR045279">
    <property type="entry name" value="ARR-like"/>
</dbReference>
<dbReference type="InterPro" id="IPR010402">
    <property type="entry name" value="CCT_domain"/>
</dbReference>
<dbReference type="InterPro" id="IPR011006">
    <property type="entry name" value="CheY-like_superfamily"/>
</dbReference>
<dbReference type="InterPro" id="IPR001789">
    <property type="entry name" value="Sig_transdc_resp-reg_receiver"/>
</dbReference>
<dbReference type="PANTHER" id="PTHR43874">
    <property type="entry name" value="TWO-COMPONENT RESPONSE REGULATOR"/>
    <property type="match status" value="1"/>
</dbReference>
<dbReference type="PANTHER" id="PTHR43874:SF146">
    <property type="entry name" value="TWO-COMPONENT RESPONSE REGULATOR-LIKE APRR9"/>
    <property type="match status" value="1"/>
</dbReference>
<dbReference type="Pfam" id="PF06203">
    <property type="entry name" value="CCT"/>
    <property type="match status" value="1"/>
</dbReference>
<dbReference type="Pfam" id="PF00072">
    <property type="entry name" value="Response_reg"/>
    <property type="match status" value="1"/>
</dbReference>
<dbReference type="SMART" id="SM00448">
    <property type="entry name" value="REC"/>
    <property type="match status" value="1"/>
</dbReference>
<dbReference type="SUPFAM" id="SSF52172">
    <property type="entry name" value="CheY-like"/>
    <property type="match status" value="1"/>
</dbReference>
<dbReference type="PROSITE" id="PS51017">
    <property type="entry name" value="CCT"/>
    <property type="match status" value="1"/>
</dbReference>
<dbReference type="PROSITE" id="PS50110">
    <property type="entry name" value="RESPONSE_REGULATORY"/>
    <property type="match status" value="1"/>
</dbReference>
<feature type="chain" id="PRO_0000081441" description="Two-component response regulator-like APRR9">
    <location>
        <begin position="1"/>
        <end position="468"/>
    </location>
</feature>
<feature type="domain" description="Response regulatory" evidence="1">
    <location>
        <begin position="38"/>
        <end position="156"/>
    </location>
</feature>
<feature type="domain" description="CCT" evidence="2">
    <location>
        <begin position="417"/>
        <end position="459"/>
    </location>
</feature>
<feature type="region of interest" description="Disordered" evidence="3">
    <location>
        <begin position="168"/>
        <end position="203"/>
    </location>
</feature>
<feature type="region of interest" description="Disordered" evidence="3">
    <location>
        <begin position="302"/>
        <end position="416"/>
    </location>
</feature>
<feature type="region of interest" description="Disordered" evidence="3">
    <location>
        <begin position="442"/>
        <end position="468"/>
    </location>
</feature>
<feature type="compositionally biased region" description="Polar residues" evidence="3">
    <location>
        <begin position="168"/>
        <end position="177"/>
    </location>
</feature>
<feature type="compositionally biased region" description="Polar residues" evidence="3">
    <location>
        <begin position="194"/>
        <end position="203"/>
    </location>
</feature>
<feature type="compositionally biased region" description="Basic and acidic residues" evidence="3">
    <location>
        <begin position="315"/>
        <end position="327"/>
    </location>
</feature>
<feature type="compositionally biased region" description="Polar residues" evidence="3">
    <location>
        <begin position="328"/>
        <end position="364"/>
    </location>
</feature>
<feature type="compositionally biased region" description="Basic and acidic residues" evidence="3">
    <location>
        <begin position="371"/>
        <end position="382"/>
    </location>
</feature>
<feature type="compositionally biased region" description="Basic and acidic residues" evidence="3">
    <location>
        <begin position="400"/>
        <end position="409"/>
    </location>
</feature>
<feature type="compositionally biased region" description="Polar residues" evidence="3">
    <location>
        <begin position="458"/>
        <end position="468"/>
    </location>
</feature>